<organismHost>
    <name type="scientific">Homo sapiens</name>
    <name type="common">Human</name>
    <dbReference type="NCBI Taxonomy" id="9606"/>
</organismHost>
<gene>
    <name evidence="2" type="primary">vif</name>
</gene>
<dbReference type="EMBL" id="AF005494">
    <property type="protein sequence ID" value="AAD03170.1"/>
    <property type="molecule type" value="Genomic_DNA"/>
</dbReference>
<dbReference type="SMR" id="O70887"/>
<dbReference type="Proteomes" id="UP000007687">
    <property type="component" value="Segment"/>
</dbReference>
<dbReference type="GO" id="GO:0030430">
    <property type="term" value="C:host cell cytoplasm"/>
    <property type="evidence" value="ECO:0007669"/>
    <property type="project" value="UniProtKB-SubCell"/>
</dbReference>
<dbReference type="GO" id="GO:0020002">
    <property type="term" value="C:host cell plasma membrane"/>
    <property type="evidence" value="ECO:0007669"/>
    <property type="project" value="UniProtKB-SubCell"/>
</dbReference>
<dbReference type="GO" id="GO:0016020">
    <property type="term" value="C:membrane"/>
    <property type="evidence" value="ECO:0007669"/>
    <property type="project" value="UniProtKB-UniRule"/>
</dbReference>
<dbReference type="GO" id="GO:0044423">
    <property type="term" value="C:virion component"/>
    <property type="evidence" value="ECO:0007669"/>
    <property type="project" value="UniProtKB-UniRule"/>
</dbReference>
<dbReference type="GO" id="GO:0046872">
    <property type="term" value="F:metal ion binding"/>
    <property type="evidence" value="ECO:0007669"/>
    <property type="project" value="UniProtKB-KW"/>
</dbReference>
<dbReference type="GO" id="GO:0003723">
    <property type="term" value="F:RNA binding"/>
    <property type="evidence" value="ECO:0007669"/>
    <property type="project" value="UniProtKB-UniRule"/>
</dbReference>
<dbReference type="GO" id="GO:0019058">
    <property type="term" value="P:viral life cycle"/>
    <property type="evidence" value="ECO:0007669"/>
    <property type="project" value="InterPro"/>
</dbReference>
<dbReference type="HAMAP" id="MF_04081">
    <property type="entry name" value="HIV_VIF"/>
    <property type="match status" value="1"/>
</dbReference>
<dbReference type="InterPro" id="IPR000475">
    <property type="entry name" value="Vif"/>
</dbReference>
<dbReference type="Pfam" id="PF00559">
    <property type="entry name" value="Vif"/>
    <property type="match status" value="1"/>
</dbReference>
<dbReference type="PRINTS" id="PR00349">
    <property type="entry name" value="VIRIONINFFCT"/>
</dbReference>
<reference key="1">
    <citation type="journal article" date="1998" name="J. Virol.">
        <title>A comprehensive panel of near-full-length clones and reference sequences for non-subtype B isolates of human immunodeficiency virus type 1.</title>
        <authorList>
            <person name="Gao F."/>
            <person name="Robertson D.L."/>
            <person name="Carruthers C.D."/>
            <person name="Morrison S.G."/>
            <person name="Jian B."/>
            <person name="Chen Y."/>
            <person name="Barre-Sinoussi F."/>
            <person name="Girard M."/>
            <person name="Srinivasan A."/>
            <person name="Abimiku A.G."/>
            <person name="Shaw G.M."/>
            <person name="Sharp P.M."/>
            <person name="Hahn B.H."/>
        </authorList>
    </citation>
    <scope>NUCLEOTIDE SEQUENCE [GENOMIC DNA]</scope>
</reference>
<organism>
    <name type="scientific">Human immunodeficiency virus type 1 group M subtype F1 (isolate 93BR020)</name>
    <name type="common">HIV-1</name>
    <dbReference type="NCBI Taxonomy" id="388814"/>
    <lineage>
        <taxon>Viruses</taxon>
        <taxon>Riboviria</taxon>
        <taxon>Pararnavirae</taxon>
        <taxon>Artverviricota</taxon>
        <taxon>Revtraviricetes</taxon>
        <taxon>Ortervirales</taxon>
        <taxon>Retroviridae</taxon>
        <taxon>Orthoretrovirinae</taxon>
        <taxon>Lentivirus</taxon>
        <taxon>Human immunodeficiency virus type 1</taxon>
    </lineage>
</organism>
<accession>O70887</accession>
<evidence type="ECO:0000250" key="1">
    <source>
        <dbReference type="UniProtKB" id="O70897"/>
    </source>
</evidence>
<evidence type="ECO:0000255" key="2">
    <source>
        <dbReference type="HAMAP-Rule" id="MF_04081"/>
    </source>
</evidence>
<evidence type="ECO:0000256" key="3">
    <source>
        <dbReference type="SAM" id="MobiDB-lite"/>
    </source>
</evidence>
<keyword id="KW-0014">AIDS</keyword>
<keyword id="KW-1032">Host cell membrane</keyword>
<keyword id="KW-1035">Host cytoplasm</keyword>
<keyword id="KW-1043">Host membrane</keyword>
<keyword id="KW-0945">Host-virus interaction</keyword>
<keyword id="KW-0472">Membrane</keyword>
<keyword id="KW-0479">Metal-binding</keyword>
<keyword id="KW-0597">Phosphoprotein</keyword>
<keyword id="KW-1185">Reference proteome</keyword>
<keyword id="KW-0694">RNA-binding</keyword>
<keyword id="KW-0832">Ubl conjugation</keyword>
<keyword id="KW-0833">Ubl conjugation pathway</keyword>
<keyword id="KW-0946">Virion</keyword>
<keyword id="KW-0862">Zinc</keyword>
<sequence length="192" mass="22641">MENRWQVMIVWQVDRMRINTWKSLVKYHMHISKKAKGWFYRHHFESRHPKISSEVHIPLETAELVITTYWGLLPGEREWHLGQGVSIEWRQGRYRTQIDPGLADQLIHIYYFDCFSESAIRKAILGHKISPRCNYQAGHNKVGSLQYLALTALIAPKKTKPPLPSVQKLVEDRWNKPQKTRGHRESHTMNGH</sequence>
<feature type="chain" id="PRO_0000245111" description="Virion infectivity factor" evidence="2">
    <location>
        <begin position="1"/>
        <end position="192"/>
    </location>
</feature>
<feature type="chain" id="PRO_0000245112" description="p17" evidence="2">
    <location>
        <begin position="1"/>
        <end position="150"/>
    </location>
</feature>
<feature type="chain" id="PRO_0000245113" description="p7" evidence="2">
    <location>
        <begin position="151"/>
        <end position="192"/>
    </location>
</feature>
<feature type="region of interest" description="Interaction with host APOBEC3F; F1-box" evidence="2">
    <location>
        <begin position="14"/>
        <end position="17"/>
    </location>
</feature>
<feature type="region of interest" description="Interaction with host APOBEC3G; G-box" evidence="2">
    <location>
        <begin position="40"/>
        <end position="44"/>
    </location>
</feature>
<feature type="region of interest" description="Interaction with host APOBEC3F and APOBEC3G; FG-box" evidence="2">
    <location>
        <begin position="54"/>
        <end position="72"/>
    </location>
</feature>
<feature type="region of interest" description="Interaction with host APOBEC3F; F2-box" evidence="2">
    <location>
        <begin position="74"/>
        <end position="79"/>
    </location>
</feature>
<feature type="region of interest" description="RNA-binding" evidence="2">
    <location>
        <begin position="75"/>
        <end position="114"/>
    </location>
</feature>
<feature type="region of interest" description="SOCS box-like" evidence="2">
    <location>
        <begin position="151"/>
        <end position="180"/>
    </location>
</feature>
<feature type="region of interest" description="Multimerization" evidence="2">
    <location>
        <begin position="151"/>
        <end position="164"/>
    </location>
</feature>
<feature type="region of interest" description="Disordered" evidence="3">
    <location>
        <begin position="164"/>
        <end position="192"/>
    </location>
</feature>
<feature type="region of interest" description="Membrane association" evidence="2">
    <location>
        <begin position="171"/>
        <end position="172"/>
    </location>
</feature>
<feature type="short sequence motif" description="HCCH motif" evidence="2">
    <location>
        <begin position="108"/>
        <end position="139"/>
    </location>
</feature>
<feature type="short sequence motif" description="BC-box-like motif" evidence="2">
    <location>
        <begin position="144"/>
        <end position="153"/>
    </location>
</feature>
<feature type="compositionally biased region" description="Basic and acidic residues" evidence="3">
    <location>
        <begin position="183"/>
        <end position="192"/>
    </location>
</feature>
<feature type="binding site" evidence="2">
    <location>
        <position position="108"/>
    </location>
    <ligand>
        <name>Zn(2+)</name>
        <dbReference type="ChEBI" id="CHEBI:29105"/>
    </ligand>
</feature>
<feature type="binding site" evidence="2">
    <location>
        <position position="114"/>
    </location>
    <ligand>
        <name>Zn(2+)</name>
        <dbReference type="ChEBI" id="CHEBI:29105"/>
    </ligand>
</feature>
<feature type="binding site" evidence="2">
    <location>
        <position position="133"/>
    </location>
    <ligand>
        <name>Zn(2+)</name>
        <dbReference type="ChEBI" id="CHEBI:29105"/>
    </ligand>
</feature>
<feature type="binding site" evidence="2">
    <location>
        <position position="139"/>
    </location>
    <ligand>
        <name>Zn(2+)</name>
        <dbReference type="ChEBI" id="CHEBI:29105"/>
    </ligand>
</feature>
<feature type="site" description="Cleavage in virion (by viral protease)" evidence="2">
    <location>
        <begin position="150"/>
        <end position="151"/>
    </location>
</feature>
<feature type="modified residue" description="Phosphothreonine; by host MAP4K1" evidence="2">
    <location>
        <position position="96"/>
    </location>
</feature>
<feature type="modified residue" description="Phosphoserine; by host" evidence="2">
    <location>
        <position position="144"/>
    </location>
</feature>
<feature type="modified residue" description="Phosphoserine; by host MAP4K1" evidence="2">
    <location>
        <position position="165"/>
    </location>
</feature>
<feature type="modified residue" description="Phosphothreonine; by host" evidence="2">
    <location>
        <position position="188"/>
    </location>
</feature>
<proteinExistence type="inferred from homology"/>
<protein>
    <recommendedName>
        <fullName evidence="2">Virion infectivity factor</fullName>
        <shortName evidence="2">Vif</shortName>
    </recommendedName>
    <alternativeName>
        <fullName evidence="2">SOR protein</fullName>
    </alternativeName>
    <component>
        <recommendedName>
            <fullName evidence="2">p17</fullName>
        </recommendedName>
    </component>
    <component>
        <recommendedName>
            <fullName evidence="2">p7</fullName>
        </recommendedName>
    </component>
</protein>
<comment type="function">
    <text evidence="2">Counteracts the innate antiviral activity of host APOBEC3F and APOBEC3G by promoting their ubiquitination and degradation. Acts as a substrate recognition component of an E3 ubiquitin-protein ligase complex: mechanistically, Vif hijacks a host cullin-5-RING E3 ubiquitin-protein ligase complex (ECS complex) and the transcription coactivator CBFB/CBF-beta to form an active E3 ubiquitin-protein ligase complex that targets APOBEC3G and APOBEC3F for polyubiquitination, leading to their degradation by the proteasome. Vif interaction with APOBEC3G also blocks its cytidine deaminase activity in a proteasome-independent manner, suggesting a dual inhibitory mechanism. May interact directly with APOBEC3G mRNA in order to inhibit its translation. Association with CBFB/CBF-beta also inhibits the transcription coactivator activity of CBFB/CBF-beta. Seems to play a role in viral morphology by affecting the stability of the viral nucleoprotein core. Finally, Vif also contributes to the G2 cell cycle arrest observed in HIV infected cells.</text>
</comment>
<comment type="subunit">
    <text evidence="1">Homomultimer; in vitro and presumably in vivo. Interacts with viral RNA and Pr55Gag precursor; these interactions mediate Vif incorporation into the virion. Interacts with the viral reverse transcriptase. Forms cullin-5-RING E3 ubiquitin-protein ligase complex (ECS complex) by interacting with host CUL5, RBX2, elongin BC complex (ELOB and ELOC) and CBFB/CBF-beta. Within the ECS complex, Vif interacts directly with host CUL5, ELOC and APOBEC (APOBEC3F and APOBEC3G) substrates. The ECS complex also contains some single-stranded RNA (ssRNA) that acts as a glue that bridges Vif with APOBEC (APOBEC3F and APOBEC3G) substrates. Interacts with host UBCE7IP1 isoform 3/ZIN and possibly with SAT. Interacts with host tyrosine kinases HCK and FYN; these interactions may decrease level of phosphorylated APOBEC3G incorporation into virions. Interacts with host ABCE1; this interaction may play a role in protecting viral RNA from damage during viral assembly. Interacts with host MDM2; this interaction targets Vif for degradation by the proteasome.</text>
</comment>
<comment type="subcellular location">
    <subcellularLocation>
        <location evidence="2">Host cytoplasm</location>
    </subcellularLocation>
    <subcellularLocation>
        <location evidence="2">Host cell membrane</location>
        <topology evidence="2">Peripheral membrane protein</topology>
        <orientation evidence="2">Cytoplasmic side</orientation>
    </subcellularLocation>
    <subcellularLocation>
        <location evidence="2">Virion</location>
    </subcellularLocation>
    <text evidence="2">In the cytoplasm, seems to colocalize with intermediate filament vimentin. A fraction is associated with the cytoplasmic side of cellular membranes, presumably via the interaction with Pr55Gag precursor. Incorporated in virions at a ratio of approximately 7 to 20 molecules per virion.</text>
</comment>
<comment type="induction">
    <text evidence="2">Expressed late during infection in a Rev-dependent manner.</text>
</comment>
<comment type="domain">
    <text evidence="2">The BC-like-box motif mediates the interaction with elongin BC complex.</text>
</comment>
<comment type="domain">
    <text evidence="2">The HCCH motif (H-x(5)-C-x(18)-C-x(5)-H) mediates the interaction with CUL5.</text>
</comment>
<comment type="PTM">
    <text evidence="2">Processed in virion by the viral protease.</text>
</comment>
<comment type="PTM">
    <text evidence="2">Highly phosphorylated on serine and threonine residues.</text>
</comment>
<comment type="PTM">
    <text evidence="2">Polyubiquitinated and degraded by the proteasome in the presence of APOBEC3G.</text>
</comment>
<comment type="miscellaneous">
    <text evidence="2">Vif-defective viruses show catastrophic failure in reverse transcription due to APOBEC-induced mutations that initiate a DNA base repair pathway and compromise the structural integrity of the ssDNA. In the absence of Vif, the virion is morphologically abnormal.</text>
</comment>
<comment type="miscellaneous">
    <text evidence="2">HIV-1 lineages are divided in three main groups, M (for Major), O (for Outlier), and N (for New, or Non-M, Non-O). The vast majority of strains found worldwide belong to the group M. Group O seems to be endemic to and largely confined to Cameroon and neighboring countries in West Central Africa, where these viruses represent a small minority of HIV-1 strains. The group N is represented by a limited number of isolates from Cameroonian persons. The group M is further subdivided in 9 clades or subtypes (A to D, F to H, J and K).</text>
</comment>
<comment type="miscellaneous">
    <text evidence="2">Required for replication in 'nonpermissive' cells, including primary T-cells, macrophages and certain T-cell lines, but is dispensable for replication in 'permissive' cell lines, such as 293T cells. In nonpermissive cells, Vif-defective viruses can produce virions, but they fail to complete reverse transcription and cannot successfully infect new cells.</text>
</comment>
<comment type="similarity">
    <text evidence="2">Belongs to the primate lentivirus group Vif protein family.</text>
</comment>
<name>VIF_HV193</name>